<feature type="chain" id="PRO_0000100180" description="Transcriptional activator protein FnrL">
    <location>
        <begin position="1"/>
        <end position="248"/>
    </location>
</feature>
<feature type="domain" description="HTH crp-type" evidence="1">
    <location>
        <begin position="154"/>
        <end position="232"/>
    </location>
</feature>
<feature type="DNA-binding region" description="H-T-H motif" evidence="1">
    <location>
        <begin position="191"/>
        <end position="210"/>
    </location>
</feature>
<evidence type="ECO:0000255" key="1">
    <source>
        <dbReference type="PROSITE-ProRule" id="PRU00387"/>
    </source>
</evidence>
<gene>
    <name type="primary">fnrL</name>
    <name type="ordered locus">RHOS4_23060</name>
    <name type="ORF">RSP_0698</name>
</gene>
<name>FNRL_CERS4</name>
<reference key="1">
    <citation type="journal article" date="1995" name="J. Bacteriol.">
        <title>Aerobic and anaerobic regulation in Rhodobacter sphaeroides 2.4.1: the role of the fnrL gene.</title>
        <authorList>
            <person name="Zeilstra-Ryalls J.H."/>
            <person name="Kaplan S."/>
        </authorList>
    </citation>
    <scope>NUCLEOTIDE SEQUENCE [GENOMIC DNA]</scope>
</reference>
<reference key="2">
    <citation type="submission" date="2005-09" db="EMBL/GenBank/DDBJ databases">
        <title>Complete sequence of chromosome 1 of Rhodobacter sphaeroides 2.4.1.</title>
        <authorList>
            <person name="Copeland A."/>
            <person name="Lucas S."/>
            <person name="Lapidus A."/>
            <person name="Barry K."/>
            <person name="Detter J.C."/>
            <person name="Glavina T."/>
            <person name="Hammon N."/>
            <person name="Israni S."/>
            <person name="Pitluck S."/>
            <person name="Richardson P."/>
            <person name="Mackenzie C."/>
            <person name="Choudhary M."/>
            <person name="Larimer F."/>
            <person name="Hauser L.J."/>
            <person name="Land M."/>
            <person name="Donohue T.J."/>
            <person name="Kaplan S."/>
        </authorList>
    </citation>
    <scope>NUCLEOTIDE SEQUENCE [LARGE SCALE GENOMIC DNA]</scope>
    <source>
        <strain>ATCC 17023 / DSM 158 / JCM 6121 / CCUG 31486 / LMG 2827 / NBRC 12203 / NCIMB 8253 / ATH 2.4.1.</strain>
    </source>
</reference>
<organism>
    <name type="scientific">Cereibacter sphaeroides (strain ATCC 17023 / DSM 158 / JCM 6121 / CCUG 31486 / LMG 2827 / NBRC 12203 / NCIMB 8253 / ATH 2.4.1.)</name>
    <name type="common">Rhodobacter sphaeroides</name>
    <dbReference type="NCBI Taxonomy" id="272943"/>
    <lineage>
        <taxon>Bacteria</taxon>
        <taxon>Pseudomonadati</taxon>
        <taxon>Pseudomonadota</taxon>
        <taxon>Alphaproteobacteria</taxon>
        <taxon>Rhodobacterales</taxon>
        <taxon>Paracoccaceae</taxon>
        <taxon>Cereibacter</taxon>
    </lineage>
</organism>
<dbReference type="EMBL" id="Z49746">
    <property type="protein sequence ID" value="CAA89820.1"/>
    <property type="molecule type" value="Genomic_DNA"/>
</dbReference>
<dbReference type="EMBL" id="CP000143">
    <property type="protein sequence ID" value="ABA79874.1"/>
    <property type="molecule type" value="Genomic_DNA"/>
</dbReference>
<dbReference type="RefSeq" id="WP_002720880.1">
    <property type="nucleotide sequence ID" value="NZ_CP030271.1"/>
</dbReference>
<dbReference type="RefSeq" id="YP_353775.1">
    <property type="nucleotide sequence ID" value="NC_007493.2"/>
</dbReference>
<dbReference type="SMR" id="P51007"/>
<dbReference type="STRING" id="272943.RSP_0698"/>
<dbReference type="EnsemblBacteria" id="ABA79874">
    <property type="protein sequence ID" value="ABA79874"/>
    <property type="gene ID" value="RSP_0698"/>
</dbReference>
<dbReference type="GeneID" id="3718176"/>
<dbReference type="KEGG" id="rsp:RSP_0698"/>
<dbReference type="PATRIC" id="fig|272943.9.peg.2650"/>
<dbReference type="eggNOG" id="COG0664">
    <property type="taxonomic scope" value="Bacteria"/>
</dbReference>
<dbReference type="OrthoDB" id="667966at2"/>
<dbReference type="PhylomeDB" id="P51007"/>
<dbReference type="Proteomes" id="UP000002703">
    <property type="component" value="Chromosome 1"/>
</dbReference>
<dbReference type="GO" id="GO:0005829">
    <property type="term" value="C:cytosol"/>
    <property type="evidence" value="ECO:0007669"/>
    <property type="project" value="TreeGrafter"/>
</dbReference>
<dbReference type="GO" id="GO:0003677">
    <property type="term" value="F:DNA binding"/>
    <property type="evidence" value="ECO:0007669"/>
    <property type="project" value="UniProtKB-KW"/>
</dbReference>
<dbReference type="GO" id="GO:0003700">
    <property type="term" value="F:DNA-binding transcription factor activity"/>
    <property type="evidence" value="ECO:0007669"/>
    <property type="project" value="InterPro"/>
</dbReference>
<dbReference type="CDD" id="cd00038">
    <property type="entry name" value="CAP_ED"/>
    <property type="match status" value="1"/>
</dbReference>
<dbReference type="CDD" id="cd00092">
    <property type="entry name" value="HTH_CRP"/>
    <property type="match status" value="1"/>
</dbReference>
<dbReference type="FunFam" id="1.10.10.10:FF:000028">
    <property type="entry name" value="Fumarate/nitrate reduction transcriptional regulator Fnr"/>
    <property type="match status" value="1"/>
</dbReference>
<dbReference type="Gene3D" id="2.60.120.10">
    <property type="entry name" value="Jelly Rolls"/>
    <property type="match status" value="1"/>
</dbReference>
<dbReference type="Gene3D" id="1.10.10.10">
    <property type="entry name" value="Winged helix-like DNA-binding domain superfamily/Winged helix DNA-binding domain"/>
    <property type="match status" value="1"/>
</dbReference>
<dbReference type="InterPro" id="IPR000595">
    <property type="entry name" value="cNMP-bd_dom"/>
</dbReference>
<dbReference type="InterPro" id="IPR018490">
    <property type="entry name" value="cNMP-bd_dom_sf"/>
</dbReference>
<dbReference type="InterPro" id="IPR050397">
    <property type="entry name" value="Env_Response_Regulators"/>
</dbReference>
<dbReference type="InterPro" id="IPR012318">
    <property type="entry name" value="HTH_CRP"/>
</dbReference>
<dbReference type="InterPro" id="IPR014710">
    <property type="entry name" value="RmlC-like_jellyroll"/>
</dbReference>
<dbReference type="InterPro" id="IPR018335">
    <property type="entry name" value="Tscrpt_reg_HTH_Crp-type_CS"/>
</dbReference>
<dbReference type="InterPro" id="IPR036388">
    <property type="entry name" value="WH-like_DNA-bd_sf"/>
</dbReference>
<dbReference type="InterPro" id="IPR036390">
    <property type="entry name" value="WH_DNA-bd_sf"/>
</dbReference>
<dbReference type="NCBIfam" id="NF045989">
    <property type="entry name" value="TransRegFnrLRhodb"/>
    <property type="match status" value="1"/>
</dbReference>
<dbReference type="PANTHER" id="PTHR24567">
    <property type="entry name" value="CRP FAMILY TRANSCRIPTIONAL REGULATORY PROTEIN"/>
    <property type="match status" value="1"/>
</dbReference>
<dbReference type="PANTHER" id="PTHR24567:SF75">
    <property type="entry name" value="FUMARATE AND NITRATE REDUCTION REGULATORY PROTEIN"/>
    <property type="match status" value="1"/>
</dbReference>
<dbReference type="Pfam" id="PF00027">
    <property type="entry name" value="cNMP_binding"/>
    <property type="match status" value="1"/>
</dbReference>
<dbReference type="Pfam" id="PF13545">
    <property type="entry name" value="HTH_Crp_2"/>
    <property type="match status" value="1"/>
</dbReference>
<dbReference type="PRINTS" id="PR00034">
    <property type="entry name" value="HTHCRP"/>
</dbReference>
<dbReference type="SMART" id="SM00100">
    <property type="entry name" value="cNMP"/>
    <property type="match status" value="1"/>
</dbReference>
<dbReference type="SMART" id="SM00419">
    <property type="entry name" value="HTH_CRP"/>
    <property type="match status" value="1"/>
</dbReference>
<dbReference type="SUPFAM" id="SSF51206">
    <property type="entry name" value="cAMP-binding domain-like"/>
    <property type="match status" value="1"/>
</dbReference>
<dbReference type="SUPFAM" id="SSF46785">
    <property type="entry name" value="Winged helix' DNA-binding domain"/>
    <property type="match status" value="1"/>
</dbReference>
<dbReference type="PROSITE" id="PS50042">
    <property type="entry name" value="CNMP_BINDING_3"/>
    <property type="match status" value="1"/>
</dbReference>
<dbReference type="PROSITE" id="PS00042">
    <property type="entry name" value="HTH_CRP_1"/>
    <property type="match status" value="1"/>
</dbReference>
<dbReference type="PROSITE" id="PS51063">
    <property type="entry name" value="HTH_CRP_2"/>
    <property type="match status" value="1"/>
</dbReference>
<accession>P51007</accession>
<accession>Q3J010</accession>
<comment type="function">
    <text>Anaerobic regulatory protein; transcriptional activator of hemA. Appears to regulate other genes.</text>
</comment>
<comment type="miscellaneous">
    <text>Possesses 4 cysteines which may bind a metal ion (possibly iron).</text>
</comment>
<proteinExistence type="predicted"/>
<sequence length="248" mass="27800">MTLHEVPTILHRCGDCPIRHRAVCARCDSEELATLEQIKYYRSYQAGQTVIWSGDKMDFVASVVTGIATLTQTMEDGRRQMVGLLLPSDFVGRPGRQTVAYDVTATTDLLMCCFRRKPFEEMMQKTPHVGQRLLEMTLDELDAAREWMLLLGRKTAREKIASLLAIIARRDAALKLRESNGPMTFDLPLTREEMADYLGLTLETVSRQVSALKRDGVIALEGKRHVIVTDFARLLEEAGDDSDGGLPV</sequence>
<protein>
    <recommendedName>
        <fullName>Transcriptional activator protein FnrL</fullName>
    </recommendedName>
</protein>
<keyword id="KW-0010">Activator</keyword>
<keyword id="KW-0238">DNA-binding</keyword>
<keyword id="KW-0408">Iron</keyword>
<keyword id="KW-1185">Reference proteome</keyword>
<keyword id="KW-0804">Transcription</keyword>
<keyword id="KW-0805">Transcription regulation</keyword>